<accession>P11302</accession>
<proteinExistence type="inferred from homology"/>
<sequence>MDLQSFSRGNPFSGLACVWCREPLTEVDAFRCMIKDFHVVYRDGVKFGACTTCLENCLDKERRLWKGVPVTGEEAQLLHGKSLDRLCIRCCYCGGKLTKNEKQRHVLYNEPFCKTRSNIIRGRCYDCCRHGSRSNYP</sequence>
<comment type="function">
    <text evidence="1">Plays a major role in the induction and maintenance of cellular transformation. E6 associates with host UBE3A/E6-AP ubiquitin-protein ligase and modulates its activity. Protects host keratinocytes from apoptosis by mediating the degradation of host BAK1. May also inhibit host immune response.</text>
</comment>
<comment type="subunit">
    <text evidence="1">Forms homodimers. Interacts with ubiquitin-protein ligase UBE3A/E6-AP; this interaction stimulates UBE3A ubiquitin activity. Interacts with host BAK1.</text>
</comment>
<comment type="subcellular location">
    <subcellularLocation>
        <location evidence="1">Host cytoplasm</location>
    </subcellularLocation>
    <subcellularLocation>
        <location evidence="1">Host nucleus</location>
    </subcellularLocation>
</comment>
<comment type="similarity">
    <text evidence="1 2">Belongs to the papillomaviridae E6 protein family.</text>
</comment>
<organismHost>
    <name type="scientific">Bos taurus</name>
    <name type="common">Bovine</name>
    <dbReference type="NCBI Taxonomy" id="9913"/>
</organismHost>
<protein>
    <recommendedName>
        <fullName evidence="1">Protein E6</fullName>
    </recommendedName>
</protein>
<name>VE6_BPV2</name>
<dbReference type="EMBL" id="M20219">
    <property type="protein sequence ID" value="AAA66831.1"/>
    <property type="molecule type" value="Genomic_DNA"/>
</dbReference>
<dbReference type="PIR" id="H31169">
    <property type="entry name" value="W6WLB2"/>
</dbReference>
<dbReference type="SMR" id="P11302"/>
<dbReference type="Proteomes" id="UP000007612">
    <property type="component" value="Segment"/>
</dbReference>
<dbReference type="GO" id="GO:0030430">
    <property type="term" value="C:host cell cytoplasm"/>
    <property type="evidence" value="ECO:0007669"/>
    <property type="project" value="UniProtKB-SubCell"/>
</dbReference>
<dbReference type="GO" id="GO:0042025">
    <property type="term" value="C:host cell nucleus"/>
    <property type="evidence" value="ECO:0007669"/>
    <property type="project" value="UniProtKB-SubCell"/>
</dbReference>
<dbReference type="GO" id="GO:0003677">
    <property type="term" value="F:DNA binding"/>
    <property type="evidence" value="ECO:0007669"/>
    <property type="project" value="UniProtKB-UniRule"/>
</dbReference>
<dbReference type="GO" id="GO:0008270">
    <property type="term" value="F:zinc ion binding"/>
    <property type="evidence" value="ECO:0007669"/>
    <property type="project" value="UniProtKB-KW"/>
</dbReference>
<dbReference type="GO" id="GO:0006351">
    <property type="term" value="P:DNA-templated transcription"/>
    <property type="evidence" value="ECO:0007669"/>
    <property type="project" value="UniProtKB-UniRule"/>
</dbReference>
<dbReference type="GO" id="GO:0006355">
    <property type="term" value="P:regulation of DNA-templated transcription"/>
    <property type="evidence" value="ECO:0007669"/>
    <property type="project" value="UniProtKB-UniRule"/>
</dbReference>
<dbReference type="GO" id="GO:0052150">
    <property type="term" value="P:symbiont-mediated perturbation of host apoptosis"/>
    <property type="evidence" value="ECO:0007669"/>
    <property type="project" value="UniProtKB-KW"/>
</dbReference>
<dbReference type="GO" id="GO:0039648">
    <property type="term" value="P:symbiont-mediated perturbation of host ubiquitin-like protein modification"/>
    <property type="evidence" value="ECO:0007669"/>
    <property type="project" value="UniProtKB-UniRule"/>
</dbReference>
<dbReference type="GO" id="GO:0052170">
    <property type="term" value="P:symbiont-mediated suppression of host innate immune response"/>
    <property type="evidence" value="ECO:0007669"/>
    <property type="project" value="UniProtKB-KW"/>
</dbReference>
<dbReference type="GO" id="GO:0039502">
    <property type="term" value="P:symbiont-mediated suppression of host type I interferon-mediated signaling pathway"/>
    <property type="evidence" value="ECO:0007669"/>
    <property type="project" value="UniProtKB-UniRule"/>
</dbReference>
<dbReference type="Gene3D" id="3.30.240.40">
    <property type="entry name" value="E6 early regulatory protein"/>
    <property type="match status" value="2"/>
</dbReference>
<dbReference type="HAMAP" id="MF_04006">
    <property type="entry name" value="HPV_E6"/>
    <property type="match status" value="1"/>
</dbReference>
<dbReference type="InterPro" id="IPR001334">
    <property type="entry name" value="E6"/>
</dbReference>
<dbReference type="InterPro" id="IPR038575">
    <property type="entry name" value="E6_sf"/>
</dbReference>
<dbReference type="Pfam" id="PF00518">
    <property type="entry name" value="E6"/>
    <property type="match status" value="1"/>
</dbReference>
<dbReference type="SUPFAM" id="SSF161229">
    <property type="entry name" value="E6 C-terminal domain-like"/>
    <property type="match status" value="2"/>
</dbReference>
<keyword id="KW-0010">Activator</keyword>
<keyword id="KW-0238">DNA-binding</keyword>
<keyword id="KW-0244">Early protein</keyword>
<keyword id="KW-1035">Host cytoplasm</keyword>
<keyword id="KW-1048">Host nucleus</keyword>
<keyword id="KW-0945">Host-virus interaction</keyword>
<keyword id="KW-1090">Inhibition of host innate immune response by virus</keyword>
<keyword id="KW-0479">Metal-binding</keyword>
<keyword id="KW-1119">Modulation of host cell apoptosis by virus</keyword>
<keyword id="KW-0804">Transcription</keyword>
<keyword id="KW-0805">Transcription regulation</keyword>
<keyword id="KW-0899">Viral immunoevasion</keyword>
<keyword id="KW-0862">Zinc</keyword>
<keyword id="KW-0863">Zinc-finger</keyword>
<reference key="1">
    <citation type="submission" date="1988-05" db="EMBL/GenBank/DDBJ databases">
        <authorList>
            <person name="Groff D.E."/>
            <person name="Mitra R."/>
            <person name="Lancaster W.D."/>
        </authorList>
    </citation>
    <scope>NUCLEOTIDE SEQUENCE [GENOMIC DNA]</scope>
</reference>
<feature type="chain" id="PRO_0000133316" description="Protein E6">
    <location>
        <begin position="1"/>
        <end position="137"/>
    </location>
</feature>
<feature type="zinc finger region" evidence="1">
    <location>
        <begin position="17"/>
        <end position="53"/>
    </location>
</feature>
<feature type="zinc finger region" evidence="1">
    <location>
        <begin position="90"/>
        <end position="127"/>
    </location>
</feature>
<gene>
    <name evidence="1" type="primary">E6</name>
</gene>
<evidence type="ECO:0000255" key="1">
    <source>
        <dbReference type="HAMAP-Rule" id="MF_04006"/>
    </source>
</evidence>
<evidence type="ECO:0000305" key="2"/>
<organism>
    <name type="scientific">Bos taurus papillomavirus 2</name>
    <name type="common">Bovine papillomavirus 2</name>
    <dbReference type="NCBI Taxonomy" id="2758382"/>
    <lineage>
        <taxon>Viruses</taxon>
        <taxon>Monodnaviria</taxon>
        <taxon>Shotokuvirae</taxon>
        <taxon>Cossaviricota</taxon>
        <taxon>Papovaviricetes</taxon>
        <taxon>Zurhausenvirales</taxon>
        <taxon>Papillomaviridae</taxon>
        <taxon>Firstpapillomavirinae</taxon>
        <taxon>Deltapapillomavirus</taxon>
        <taxon>Bovine papillomavirus type 1</taxon>
    </lineage>
</organism>